<reference key="1">
    <citation type="submission" date="2006-06" db="EMBL/GenBank/DDBJ databases">
        <title>Complete sequence of Pseudoalteromonas atlantica T6c.</title>
        <authorList>
            <consortium name="US DOE Joint Genome Institute"/>
            <person name="Copeland A."/>
            <person name="Lucas S."/>
            <person name="Lapidus A."/>
            <person name="Barry K."/>
            <person name="Detter J.C."/>
            <person name="Glavina del Rio T."/>
            <person name="Hammon N."/>
            <person name="Israni S."/>
            <person name="Dalin E."/>
            <person name="Tice H."/>
            <person name="Pitluck S."/>
            <person name="Saunders E."/>
            <person name="Brettin T."/>
            <person name="Bruce D."/>
            <person name="Han C."/>
            <person name="Tapia R."/>
            <person name="Gilna P."/>
            <person name="Schmutz J."/>
            <person name="Larimer F."/>
            <person name="Land M."/>
            <person name="Hauser L."/>
            <person name="Kyrpides N."/>
            <person name="Kim E."/>
            <person name="Karls A.C."/>
            <person name="Bartlett D."/>
            <person name="Higgins B.P."/>
            <person name="Richardson P."/>
        </authorList>
    </citation>
    <scope>NUCLEOTIDE SEQUENCE [LARGE SCALE GENOMIC DNA]</scope>
    <source>
        <strain>T6c / ATCC BAA-1087</strain>
    </source>
</reference>
<comment type="function">
    <text evidence="1">An aminoacyl-tRNA editing enzyme that deacylates mischarged D-aminoacyl-tRNAs. Also deacylates mischarged glycyl-tRNA(Ala), protecting cells against glycine mischarging by AlaRS. Acts via tRNA-based rather than protein-based catalysis; rejects L-amino acids rather than detecting D-amino acids in the active site. By recycling D-aminoacyl-tRNA to D-amino acids and free tRNA molecules, this enzyme counteracts the toxicity associated with the formation of D-aminoacyl-tRNA entities in vivo and helps enforce protein L-homochirality.</text>
</comment>
<comment type="catalytic activity">
    <reaction evidence="1">
        <text>glycyl-tRNA(Ala) + H2O = tRNA(Ala) + glycine + H(+)</text>
        <dbReference type="Rhea" id="RHEA:53744"/>
        <dbReference type="Rhea" id="RHEA-COMP:9657"/>
        <dbReference type="Rhea" id="RHEA-COMP:13640"/>
        <dbReference type="ChEBI" id="CHEBI:15377"/>
        <dbReference type="ChEBI" id="CHEBI:15378"/>
        <dbReference type="ChEBI" id="CHEBI:57305"/>
        <dbReference type="ChEBI" id="CHEBI:78442"/>
        <dbReference type="ChEBI" id="CHEBI:78522"/>
        <dbReference type="EC" id="3.1.1.96"/>
    </reaction>
</comment>
<comment type="catalytic activity">
    <reaction evidence="1">
        <text>a D-aminoacyl-tRNA + H2O = a tRNA + a D-alpha-amino acid + H(+)</text>
        <dbReference type="Rhea" id="RHEA:13953"/>
        <dbReference type="Rhea" id="RHEA-COMP:10123"/>
        <dbReference type="Rhea" id="RHEA-COMP:10124"/>
        <dbReference type="ChEBI" id="CHEBI:15377"/>
        <dbReference type="ChEBI" id="CHEBI:15378"/>
        <dbReference type="ChEBI" id="CHEBI:59871"/>
        <dbReference type="ChEBI" id="CHEBI:78442"/>
        <dbReference type="ChEBI" id="CHEBI:79333"/>
        <dbReference type="EC" id="3.1.1.96"/>
    </reaction>
</comment>
<comment type="subunit">
    <text evidence="1">Homodimer.</text>
</comment>
<comment type="subcellular location">
    <subcellularLocation>
        <location evidence="1">Cytoplasm</location>
    </subcellularLocation>
</comment>
<comment type="domain">
    <text evidence="1">A Gly-cisPro motif from one monomer fits into the active site of the other monomer to allow specific chiral rejection of L-amino acids.</text>
</comment>
<comment type="similarity">
    <text evidence="1">Belongs to the DTD family.</text>
</comment>
<evidence type="ECO:0000255" key="1">
    <source>
        <dbReference type="HAMAP-Rule" id="MF_00518"/>
    </source>
</evidence>
<protein>
    <recommendedName>
        <fullName evidence="1">D-aminoacyl-tRNA deacylase</fullName>
        <shortName evidence="1">DTD</shortName>
        <ecNumber evidence="1">3.1.1.96</ecNumber>
    </recommendedName>
    <alternativeName>
        <fullName evidence="1">Gly-tRNA(Ala) deacylase</fullName>
    </alternativeName>
</protein>
<feature type="chain" id="PRO_1000050868" description="D-aminoacyl-tRNA deacylase">
    <location>
        <begin position="1"/>
        <end position="145"/>
    </location>
</feature>
<feature type="short sequence motif" description="Gly-cisPro motif, important for rejection of L-amino acids" evidence="1">
    <location>
        <begin position="137"/>
        <end position="138"/>
    </location>
</feature>
<gene>
    <name evidence="1" type="primary">dtd</name>
    <name type="ordered locus">Patl_3950</name>
</gene>
<organism>
    <name type="scientific">Pseudoalteromonas atlantica (strain T6c / ATCC BAA-1087)</name>
    <dbReference type="NCBI Taxonomy" id="3042615"/>
    <lineage>
        <taxon>Bacteria</taxon>
        <taxon>Pseudomonadati</taxon>
        <taxon>Pseudomonadota</taxon>
        <taxon>Gammaproteobacteria</taxon>
        <taxon>Alteromonadales</taxon>
        <taxon>Alteromonadaceae</taxon>
        <taxon>Paraglaciecola</taxon>
    </lineage>
</organism>
<sequence>MIGLIQRVSEASVCVGNEVIGEINQGILLLLGVEKNDNEEKAKKLFQRVLNYRIFSDQDSKMNLNLQQVGGGLLVVSQFTLVAQTNKGNRPGFSQGASPELGKTLYNYFVELGRSSEILCESGKFGADMQVRLINDGPVTFSLNV</sequence>
<dbReference type="EC" id="3.1.1.96" evidence="1"/>
<dbReference type="EMBL" id="CP000388">
    <property type="protein sequence ID" value="ABG42450.1"/>
    <property type="molecule type" value="Genomic_DNA"/>
</dbReference>
<dbReference type="RefSeq" id="WP_011576655.1">
    <property type="nucleotide sequence ID" value="NC_008228.1"/>
</dbReference>
<dbReference type="SMR" id="Q15NT8"/>
<dbReference type="STRING" id="342610.Patl_3950"/>
<dbReference type="KEGG" id="pat:Patl_3950"/>
<dbReference type="eggNOG" id="COG1490">
    <property type="taxonomic scope" value="Bacteria"/>
</dbReference>
<dbReference type="HOGENOM" id="CLU_076901_1_0_6"/>
<dbReference type="OrthoDB" id="9801395at2"/>
<dbReference type="Proteomes" id="UP000001981">
    <property type="component" value="Chromosome"/>
</dbReference>
<dbReference type="GO" id="GO:0005737">
    <property type="term" value="C:cytoplasm"/>
    <property type="evidence" value="ECO:0007669"/>
    <property type="project" value="UniProtKB-SubCell"/>
</dbReference>
<dbReference type="GO" id="GO:0051500">
    <property type="term" value="F:D-tyrosyl-tRNA(Tyr) deacylase activity"/>
    <property type="evidence" value="ECO:0007669"/>
    <property type="project" value="TreeGrafter"/>
</dbReference>
<dbReference type="GO" id="GO:0106026">
    <property type="term" value="F:Gly-tRNA(Ala) deacylase activity"/>
    <property type="evidence" value="ECO:0007669"/>
    <property type="project" value="UniProtKB-UniRule"/>
</dbReference>
<dbReference type="GO" id="GO:0043908">
    <property type="term" value="F:Ser(Gly)-tRNA(Ala) hydrolase activity"/>
    <property type="evidence" value="ECO:0007669"/>
    <property type="project" value="UniProtKB-UniRule"/>
</dbReference>
<dbReference type="GO" id="GO:0000049">
    <property type="term" value="F:tRNA binding"/>
    <property type="evidence" value="ECO:0007669"/>
    <property type="project" value="UniProtKB-UniRule"/>
</dbReference>
<dbReference type="GO" id="GO:0019478">
    <property type="term" value="P:D-amino acid catabolic process"/>
    <property type="evidence" value="ECO:0007669"/>
    <property type="project" value="UniProtKB-UniRule"/>
</dbReference>
<dbReference type="CDD" id="cd00563">
    <property type="entry name" value="Dtyr_deacylase"/>
    <property type="match status" value="1"/>
</dbReference>
<dbReference type="FunFam" id="3.50.80.10:FF:000001">
    <property type="entry name" value="D-aminoacyl-tRNA deacylase"/>
    <property type="match status" value="1"/>
</dbReference>
<dbReference type="Gene3D" id="3.50.80.10">
    <property type="entry name" value="D-tyrosyl-tRNA(Tyr) deacylase"/>
    <property type="match status" value="1"/>
</dbReference>
<dbReference type="HAMAP" id="MF_00518">
    <property type="entry name" value="Deacylase_Dtd"/>
    <property type="match status" value="1"/>
</dbReference>
<dbReference type="InterPro" id="IPR003732">
    <property type="entry name" value="Daa-tRNA_deacyls_DTD"/>
</dbReference>
<dbReference type="InterPro" id="IPR023509">
    <property type="entry name" value="DTD-like_sf"/>
</dbReference>
<dbReference type="NCBIfam" id="TIGR00256">
    <property type="entry name" value="D-aminoacyl-tRNA deacylase"/>
    <property type="match status" value="1"/>
</dbReference>
<dbReference type="PANTHER" id="PTHR10472:SF5">
    <property type="entry name" value="D-AMINOACYL-TRNA DEACYLASE 1"/>
    <property type="match status" value="1"/>
</dbReference>
<dbReference type="PANTHER" id="PTHR10472">
    <property type="entry name" value="D-TYROSYL-TRNA TYR DEACYLASE"/>
    <property type="match status" value="1"/>
</dbReference>
<dbReference type="Pfam" id="PF02580">
    <property type="entry name" value="Tyr_Deacylase"/>
    <property type="match status" value="1"/>
</dbReference>
<dbReference type="SUPFAM" id="SSF69500">
    <property type="entry name" value="DTD-like"/>
    <property type="match status" value="1"/>
</dbReference>
<proteinExistence type="inferred from homology"/>
<accession>Q15NT8</accession>
<keyword id="KW-0963">Cytoplasm</keyword>
<keyword id="KW-0378">Hydrolase</keyword>
<keyword id="KW-0694">RNA-binding</keyword>
<keyword id="KW-0820">tRNA-binding</keyword>
<name>DTD_PSEA6</name>